<keyword id="KW-1003">Cell membrane</keyword>
<keyword id="KW-0472">Membrane</keyword>
<keyword id="KW-1185">Reference proteome</keyword>
<keyword id="KW-0812">Transmembrane</keyword>
<keyword id="KW-1133">Transmembrane helix</keyword>
<keyword id="KW-0813">Transport</keyword>
<proteinExistence type="inferred from homology"/>
<comment type="subcellular location">
    <subcellularLocation>
        <location evidence="2">Cell membrane</location>
        <topology evidence="2">Multi-pass membrane protein</topology>
    </subcellularLocation>
</comment>
<comment type="similarity">
    <text evidence="2">Belongs to the AzlD/HI_1737/HP1330 family.</text>
</comment>
<gene>
    <name type="ordered locus">HP_1330</name>
</gene>
<evidence type="ECO:0000255" key="1"/>
<evidence type="ECO:0000305" key="2"/>
<name>Y1330_HELPY</name>
<protein>
    <recommendedName>
        <fullName>Uncharacterized protein HP_1330</fullName>
    </recommendedName>
</protein>
<accession>O25888</accession>
<dbReference type="EMBL" id="AE000511">
    <property type="protein sequence ID" value="AAD08371.1"/>
    <property type="molecule type" value="Genomic_DNA"/>
</dbReference>
<dbReference type="PIR" id="B64686">
    <property type="entry name" value="B64686"/>
</dbReference>
<dbReference type="RefSeq" id="NP_208122.1">
    <property type="nucleotide sequence ID" value="NC_000915.1"/>
</dbReference>
<dbReference type="RefSeq" id="WP_000928535.1">
    <property type="nucleotide sequence ID" value="NC_018939.1"/>
</dbReference>
<dbReference type="STRING" id="85962.HP_1330"/>
<dbReference type="PaxDb" id="85962-C694_06865"/>
<dbReference type="EnsemblBacteria" id="AAD08371">
    <property type="protein sequence ID" value="AAD08371"/>
    <property type="gene ID" value="HP_1330"/>
</dbReference>
<dbReference type="KEGG" id="heo:C694_06865"/>
<dbReference type="KEGG" id="hpy:HP_1330"/>
<dbReference type="PATRIC" id="fig|85962.47.peg.1424"/>
<dbReference type="eggNOG" id="COG1687">
    <property type="taxonomic scope" value="Bacteria"/>
</dbReference>
<dbReference type="InParanoid" id="O25888"/>
<dbReference type="OrthoDB" id="5324916at2"/>
<dbReference type="PhylomeDB" id="O25888"/>
<dbReference type="Proteomes" id="UP000000429">
    <property type="component" value="Chromosome"/>
</dbReference>
<dbReference type="GO" id="GO:0005886">
    <property type="term" value="C:plasma membrane"/>
    <property type="evidence" value="ECO:0007669"/>
    <property type="project" value="UniProtKB-SubCell"/>
</dbReference>
<dbReference type="InterPro" id="IPR008407">
    <property type="entry name" value="Brnchd-chn_aa_trnsp_AzlD"/>
</dbReference>
<dbReference type="Pfam" id="PF05437">
    <property type="entry name" value="AzlD"/>
    <property type="match status" value="1"/>
</dbReference>
<dbReference type="PIRSF" id="PIRSF003203">
    <property type="entry name" value="AzlD"/>
    <property type="match status" value="1"/>
</dbReference>
<sequence>MLMHSILIILVIILTTYFTRIWPFMVFNAKNPPNDFVRYLGRALSCSVIGMLVIYCFKDIHILKPPYGINEITAFLSVILLHRIFKVFVLSITLPTILYMVLVQSHALEKAFFNP</sequence>
<reference key="1">
    <citation type="journal article" date="1997" name="Nature">
        <title>The complete genome sequence of the gastric pathogen Helicobacter pylori.</title>
        <authorList>
            <person name="Tomb J.-F."/>
            <person name="White O."/>
            <person name="Kerlavage A.R."/>
            <person name="Clayton R.A."/>
            <person name="Sutton G.G."/>
            <person name="Fleischmann R.D."/>
            <person name="Ketchum K.A."/>
            <person name="Klenk H.-P."/>
            <person name="Gill S.R."/>
            <person name="Dougherty B.A."/>
            <person name="Nelson K.E."/>
            <person name="Quackenbush J."/>
            <person name="Zhou L."/>
            <person name="Kirkness E.F."/>
            <person name="Peterson S.N."/>
            <person name="Loftus B.J."/>
            <person name="Richardson D.L."/>
            <person name="Dodson R.J."/>
            <person name="Khalak H.G."/>
            <person name="Glodek A."/>
            <person name="McKenney K."/>
            <person name="FitzGerald L.M."/>
            <person name="Lee N."/>
            <person name="Adams M.D."/>
            <person name="Hickey E.K."/>
            <person name="Berg D.E."/>
            <person name="Gocayne J.D."/>
            <person name="Utterback T.R."/>
            <person name="Peterson J.D."/>
            <person name="Kelley J.M."/>
            <person name="Cotton M.D."/>
            <person name="Weidman J.F."/>
            <person name="Fujii C."/>
            <person name="Bowman C."/>
            <person name="Watthey L."/>
            <person name="Wallin E."/>
            <person name="Hayes W.S."/>
            <person name="Borodovsky M."/>
            <person name="Karp P.D."/>
            <person name="Smith H.O."/>
            <person name="Fraser C.M."/>
            <person name="Venter J.C."/>
        </authorList>
    </citation>
    <scope>NUCLEOTIDE SEQUENCE [LARGE SCALE GENOMIC DNA]</scope>
    <source>
        <strain>ATCC 700392 / 26695</strain>
    </source>
</reference>
<feature type="chain" id="PRO_0000128698" description="Uncharacterized protein HP_1330">
    <location>
        <begin position="1"/>
        <end position="115"/>
    </location>
</feature>
<feature type="transmembrane region" description="Helical" evidence="1">
    <location>
        <begin position="6"/>
        <end position="26"/>
    </location>
</feature>
<feature type="transmembrane region" description="Helical" evidence="1">
    <location>
        <begin position="43"/>
        <end position="63"/>
    </location>
</feature>
<feature type="transmembrane region" description="Helical" evidence="1">
    <location>
        <begin position="84"/>
        <end position="104"/>
    </location>
</feature>
<organism>
    <name type="scientific">Helicobacter pylori (strain ATCC 700392 / 26695)</name>
    <name type="common">Campylobacter pylori</name>
    <dbReference type="NCBI Taxonomy" id="85962"/>
    <lineage>
        <taxon>Bacteria</taxon>
        <taxon>Pseudomonadati</taxon>
        <taxon>Campylobacterota</taxon>
        <taxon>Epsilonproteobacteria</taxon>
        <taxon>Campylobacterales</taxon>
        <taxon>Helicobacteraceae</taxon>
        <taxon>Helicobacter</taxon>
    </lineage>
</organism>